<protein>
    <recommendedName>
        <fullName>NAD(P)H-quinone oxidoreductase subunit 5, chloroplastic</fullName>
        <ecNumber>7.1.1.-</ecNumber>
    </recommendedName>
    <alternativeName>
        <fullName>NAD(P)H dehydrogenase subunit 5</fullName>
    </alternativeName>
    <alternativeName>
        <fullName>NADH-plastoquinone oxidoreductase subunit 5</fullName>
    </alternativeName>
</protein>
<gene>
    <name type="primary">ndhF</name>
</gene>
<sequence>MEHTYQYAWIIPFVPLPVTMSIGLGLLLVPTATKNLRRMWAFPSVSLLSIVMVFSADLSIQQINGSSIYQYLCSWTINNDFSLEFGHLIDPLTSIMSILITTVGIMVLIYSDNYMSHDQGYLRFFAYMSFSNTSMLGLVTSSNLIQIHIFWELVGMCSYLLIGFWFTRPIAANACQKAFVTNRVGDFGLLLGILGFYWITGSLEFRDLFEIFNNLIHTNGVNSLFATLCAFLLFVGAVAKSAQFPLHVWLPDAMEGPTPISALIHAATMVAAGIFLVARLLPIFTVIPYIMNLISLLGIITVLLGATLALAQKDIKRSLAYSTMSQLGYTMLAPGIGSYRAALFHLITHAYSKALLFLGSGSIIHSMEPIVGYSPDKSQNMVLMGGLTKYVPITKTTFLLGTLSLCGIPPLACFWSKDEILNDSWLYSPIFAIIACSTAGLTAFYMFRMYLLTFEGHLHIRFQNYSGTKNSSFCSISIWGKEGPEPVKKKLLLSVMNNNQKVSFFSKKIYQIDGNVRNLMRSFSTHFDNKDTSMYPCESDNTMLFPLLVLVLFTLFVGSIGIPFDQVGSDFDILSKWLTPSINLLHQNSNYSVDWYEFVTNAIYSVSISYFGIFIASLLYGSVYSSFQNLDLINSFVKIGPKRLFLDRIINVIYNWSYNRGYIDVFYATFLTKGIRGLAELTNFFDRRVIDGITNGVGIASFFVGEGIKYVGGGRISSYLFVYLSYVSTFLLIYYFYFLNR</sequence>
<proteinExistence type="inferred from homology"/>
<geneLocation type="chloroplast"/>
<feature type="chain" id="PRO_0000360945" description="NAD(P)H-quinone oxidoreductase subunit 5, chloroplastic">
    <location>
        <begin position="1"/>
        <end position="741"/>
    </location>
</feature>
<feature type="transmembrane region" description="Helical" evidence="2">
    <location>
        <begin position="9"/>
        <end position="29"/>
    </location>
</feature>
<feature type="transmembrane region" description="Helical" evidence="2">
    <location>
        <begin position="40"/>
        <end position="60"/>
    </location>
</feature>
<feature type="transmembrane region" description="Helical" evidence="2">
    <location>
        <begin position="89"/>
        <end position="109"/>
    </location>
</feature>
<feature type="transmembrane region" description="Helical" evidence="2">
    <location>
        <begin position="122"/>
        <end position="139"/>
    </location>
</feature>
<feature type="transmembrane region" description="Helical" evidence="2">
    <location>
        <begin position="147"/>
        <end position="167"/>
    </location>
</feature>
<feature type="transmembrane region" description="Helical" evidence="2">
    <location>
        <begin position="185"/>
        <end position="205"/>
    </location>
</feature>
<feature type="transmembrane region" description="Helical" evidence="2">
    <location>
        <begin position="219"/>
        <end position="239"/>
    </location>
</feature>
<feature type="transmembrane region" description="Helical" evidence="2">
    <location>
        <begin position="258"/>
        <end position="278"/>
    </location>
</feature>
<feature type="transmembrane region" description="Helical" evidence="2">
    <location>
        <begin position="280"/>
        <end position="300"/>
    </location>
</feature>
<feature type="transmembrane region" description="Helical" evidence="2">
    <location>
        <begin position="396"/>
        <end position="416"/>
    </location>
</feature>
<feature type="transmembrane region" description="Helical" evidence="2">
    <location>
        <begin position="425"/>
        <end position="445"/>
    </location>
</feature>
<feature type="transmembrane region" description="Helical" evidence="2">
    <location>
        <begin position="544"/>
        <end position="564"/>
    </location>
</feature>
<feature type="transmembrane region" description="Helical" evidence="2">
    <location>
        <begin position="603"/>
        <end position="623"/>
    </location>
</feature>
<feature type="transmembrane region" description="Helical" evidence="2">
    <location>
        <begin position="719"/>
        <end position="739"/>
    </location>
</feature>
<comment type="function">
    <text evidence="1">NDH shuttles electrons from NAD(P)H:plastoquinone, via FMN and iron-sulfur (Fe-S) centers, to quinones in the photosynthetic chain and possibly in a chloroplast respiratory chain. The immediate electron acceptor for the enzyme in this species is believed to be plastoquinone. Couples the redox reaction to proton translocation, and thus conserves the redox energy in a proton gradient (By similarity).</text>
</comment>
<comment type="catalytic activity">
    <reaction>
        <text>a plastoquinone + NADH + (n+1) H(+)(in) = a plastoquinol + NAD(+) + n H(+)(out)</text>
        <dbReference type="Rhea" id="RHEA:42608"/>
        <dbReference type="Rhea" id="RHEA-COMP:9561"/>
        <dbReference type="Rhea" id="RHEA-COMP:9562"/>
        <dbReference type="ChEBI" id="CHEBI:15378"/>
        <dbReference type="ChEBI" id="CHEBI:17757"/>
        <dbReference type="ChEBI" id="CHEBI:57540"/>
        <dbReference type="ChEBI" id="CHEBI:57945"/>
        <dbReference type="ChEBI" id="CHEBI:62192"/>
    </reaction>
</comment>
<comment type="catalytic activity">
    <reaction>
        <text>a plastoquinone + NADPH + (n+1) H(+)(in) = a plastoquinol + NADP(+) + n H(+)(out)</text>
        <dbReference type="Rhea" id="RHEA:42612"/>
        <dbReference type="Rhea" id="RHEA-COMP:9561"/>
        <dbReference type="Rhea" id="RHEA-COMP:9562"/>
        <dbReference type="ChEBI" id="CHEBI:15378"/>
        <dbReference type="ChEBI" id="CHEBI:17757"/>
        <dbReference type="ChEBI" id="CHEBI:57783"/>
        <dbReference type="ChEBI" id="CHEBI:58349"/>
        <dbReference type="ChEBI" id="CHEBI:62192"/>
    </reaction>
</comment>
<comment type="subunit">
    <text evidence="1">NDH is composed of at least 16 different subunits, 5 of which are encoded in the nucleus.</text>
</comment>
<comment type="subcellular location">
    <subcellularLocation>
        <location evidence="1">Plastid</location>
        <location evidence="1">Chloroplast thylakoid membrane</location>
        <topology evidence="1">Multi-pass membrane protein</topology>
    </subcellularLocation>
</comment>
<comment type="similarity">
    <text evidence="3">Belongs to the complex I subunit 5 family.</text>
</comment>
<keyword id="KW-0150">Chloroplast</keyword>
<keyword id="KW-0472">Membrane</keyword>
<keyword id="KW-0520">NAD</keyword>
<keyword id="KW-0521">NADP</keyword>
<keyword id="KW-0934">Plastid</keyword>
<keyword id="KW-0618">Plastoquinone</keyword>
<keyword id="KW-0874">Quinone</keyword>
<keyword id="KW-0793">Thylakoid</keyword>
<keyword id="KW-1278">Translocase</keyword>
<keyword id="KW-0812">Transmembrane</keyword>
<keyword id="KW-1133">Transmembrane helix</keyword>
<keyword id="KW-0813">Transport</keyword>
<reference key="1">
    <citation type="journal article" date="2006" name="BMC Evol. Biol.">
        <title>Complete plastid genome sequences of Drimys, Liriodendron, and Piper: implications for the phylogenetic relationships of magnoliids.</title>
        <authorList>
            <person name="Cai Z."/>
            <person name="Penaflor C."/>
            <person name="Kuehl J.V."/>
            <person name="Leebens-Mack J."/>
            <person name="Carlson J.E."/>
            <person name="dePamphilis C.W."/>
            <person name="Boore J.L."/>
            <person name="Jansen R.K."/>
        </authorList>
    </citation>
    <scope>NUCLEOTIDE SEQUENCE [LARGE SCALE GENOMIC DNA]</scope>
</reference>
<evidence type="ECO:0000250" key="1"/>
<evidence type="ECO:0000255" key="2"/>
<evidence type="ECO:0000305" key="3"/>
<dbReference type="EC" id="7.1.1.-"/>
<dbReference type="EMBL" id="DQ899947">
    <property type="protein sequence ID" value="ABI32556.1"/>
    <property type="molecule type" value="Genomic_DNA"/>
</dbReference>
<dbReference type="RefSeq" id="YP_740249.1">
    <property type="nucleotide sequence ID" value="NC_008326.1"/>
</dbReference>
<dbReference type="SMR" id="Q0G9H2"/>
<dbReference type="GeneID" id="4266680"/>
<dbReference type="GO" id="GO:0009535">
    <property type="term" value="C:chloroplast thylakoid membrane"/>
    <property type="evidence" value="ECO:0007669"/>
    <property type="project" value="UniProtKB-SubCell"/>
</dbReference>
<dbReference type="GO" id="GO:0008137">
    <property type="term" value="F:NADH dehydrogenase (ubiquinone) activity"/>
    <property type="evidence" value="ECO:0007669"/>
    <property type="project" value="InterPro"/>
</dbReference>
<dbReference type="GO" id="GO:0048038">
    <property type="term" value="F:quinone binding"/>
    <property type="evidence" value="ECO:0007669"/>
    <property type="project" value="UniProtKB-KW"/>
</dbReference>
<dbReference type="GO" id="GO:0042773">
    <property type="term" value="P:ATP synthesis coupled electron transport"/>
    <property type="evidence" value="ECO:0007669"/>
    <property type="project" value="InterPro"/>
</dbReference>
<dbReference type="GO" id="GO:0015990">
    <property type="term" value="P:electron transport coupled proton transport"/>
    <property type="evidence" value="ECO:0007669"/>
    <property type="project" value="TreeGrafter"/>
</dbReference>
<dbReference type="Gene3D" id="1.20.5.2700">
    <property type="match status" value="1"/>
</dbReference>
<dbReference type="InterPro" id="IPR002128">
    <property type="entry name" value="NADH_UbQ_OxRdtase_chlpt_su5_C"/>
</dbReference>
<dbReference type="InterPro" id="IPR018393">
    <property type="entry name" value="NADHpl_OxRdtase_5_subgr"/>
</dbReference>
<dbReference type="InterPro" id="IPR001750">
    <property type="entry name" value="ND/Mrp_TM"/>
</dbReference>
<dbReference type="InterPro" id="IPR003945">
    <property type="entry name" value="NU5C-like"/>
</dbReference>
<dbReference type="InterPro" id="IPR001516">
    <property type="entry name" value="Proton_antipo_N"/>
</dbReference>
<dbReference type="NCBIfam" id="TIGR01974">
    <property type="entry name" value="NDH_I_L"/>
    <property type="match status" value="1"/>
</dbReference>
<dbReference type="NCBIfam" id="NF005141">
    <property type="entry name" value="PRK06590.1"/>
    <property type="match status" value="1"/>
</dbReference>
<dbReference type="PANTHER" id="PTHR42829">
    <property type="entry name" value="NADH-UBIQUINONE OXIDOREDUCTASE CHAIN 5"/>
    <property type="match status" value="1"/>
</dbReference>
<dbReference type="PANTHER" id="PTHR42829:SF2">
    <property type="entry name" value="NADH-UBIQUINONE OXIDOREDUCTASE CHAIN 5"/>
    <property type="match status" value="1"/>
</dbReference>
<dbReference type="Pfam" id="PF01010">
    <property type="entry name" value="Proton_antipo_C"/>
    <property type="match status" value="1"/>
</dbReference>
<dbReference type="Pfam" id="PF00361">
    <property type="entry name" value="Proton_antipo_M"/>
    <property type="match status" value="1"/>
</dbReference>
<dbReference type="Pfam" id="PF00662">
    <property type="entry name" value="Proton_antipo_N"/>
    <property type="match status" value="1"/>
</dbReference>
<dbReference type="PRINTS" id="PR01434">
    <property type="entry name" value="NADHDHGNASE5"/>
</dbReference>
<dbReference type="PRINTS" id="PR01435">
    <property type="entry name" value="NPOXDRDTASE5"/>
</dbReference>
<organism>
    <name type="scientific">Liriodendron tulipifera</name>
    <name type="common">Tuliptree</name>
    <name type="synonym">Tulip poplar</name>
    <dbReference type="NCBI Taxonomy" id="3415"/>
    <lineage>
        <taxon>Eukaryota</taxon>
        <taxon>Viridiplantae</taxon>
        <taxon>Streptophyta</taxon>
        <taxon>Embryophyta</taxon>
        <taxon>Tracheophyta</taxon>
        <taxon>Spermatophyta</taxon>
        <taxon>Magnoliopsida</taxon>
        <taxon>Magnoliidae</taxon>
        <taxon>Magnoliales</taxon>
        <taxon>Magnoliaceae</taxon>
        <taxon>Liriodendron</taxon>
    </lineage>
</organism>
<name>NU5C_LIRTU</name>
<accession>Q0G9H2</accession>